<keyword id="KW-0325">Glycoprotein</keyword>
<keyword id="KW-1185">Reference proteome</keyword>
<keyword id="KW-0732">Signal</keyword>
<keyword id="KW-0926">Vacuole</keyword>
<name>SSL10_ARATH</name>
<proteinExistence type="evidence at transcript level"/>
<protein>
    <recommendedName>
        <fullName evidence="4">Protein STRICTOSIDINE SYNTHASE-LIKE 10</fullName>
        <shortName evidence="4">AtSSL10</shortName>
    </recommendedName>
    <alternativeName>
        <fullName>Strictosidine synthase 8</fullName>
        <shortName>AtSS8</shortName>
    </alternativeName>
</protein>
<dbReference type="EMBL" id="AL138655">
    <property type="protein sequence ID" value="CAB72173.1"/>
    <property type="status" value="ALT_INIT"/>
    <property type="molecule type" value="Genomic_DNA"/>
</dbReference>
<dbReference type="EMBL" id="CP002686">
    <property type="protein sequence ID" value="AEE79601.1"/>
    <property type="molecule type" value="Genomic_DNA"/>
</dbReference>
<dbReference type="EMBL" id="BT023417">
    <property type="protein sequence ID" value="AAY56408.1"/>
    <property type="molecule type" value="mRNA"/>
</dbReference>
<dbReference type="EMBL" id="AK227831">
    <property type="protein sequence ID" value="BAE99809.1"/>
    <property type="molecule type" value="mRNA"/>
</dbReference>
<dbReference type="EMBL" id="BT026464">
    <property type="protein sequence ID" value="ABH04571.1"/>
    <property type="molecule type" value="mRNA"/>
</dbReference>
<dbReference type="PIR" id="T47763">
    <property type="entry name" value="T47763"/>
</dbReference>
<dbReference type="RefSeq" id="NP_191262.2">
    <property type="nucleotide sequence ID" value="NM_115562.4"/>
</dbReference>
<dbReference type="SMR" id="Q4V3D9"/>
<dbReference type="FunCoup" id="Q4V3D9">
    <property type="interactions" value="1588"/>
</dbReference>
<dbReference type="STRING" id="3702.Q4V3D9"/>
<dbReference type="GlyCosmos" id="Q4V3D9">
    <property type="glycosylation" value="1 site, No reported glycans"/>
</dbReference>
<dbReference type="GlyGen" id="Q4V3D9">
    <property type="glycosylation" value="1 site"/>
</dbReference>
<dbReference type="SwissPalm" id="Q4V3D9"/>
<dbReference type="PaxDb" id="3702-AT3G57030.1"/>
<dbReference type="ProteomicsDB" id="245212"/>
<dbReference type="EnsemblPlants" id="AT3G57030.1">
    <property type="protein sequence ID" value="AT3G57030.1"/>
    <property type="gene ID" value="AT3G57030"/>
</dbReference>
<dbReference type="GeneID" id="824870"/>
<dbReference type="Gramene" id="AT3G57030.1">
    <property type="protein sequence ID" value="AT3G57030.1"/>
    <property type="gene ID" value="AT3G57030"/>
</dbReference>
<dbReference type="KEGG" id="ath:AT3G57030"/>
<dbReference type="Araport" id="AT3G57030"/>
<dbReference type="TAIR" id="AT3G57030"/>
<dbReference type="eggNOG" id="KOG1520">
    <property type="taxonomic scope" value="Eukaryota"/>
</dbReference>
<dbReference type="HOGENOM" id="CLU_023267_2_0_1"/>
<dbReference type="InParanoid" id="Q4V3D9"/>
<dbReference type="OMA" id="DQNDRRW"/>
<dbReference type="PhylomeDB" id="Q4V3D9"/>
<dbReference type="BioCyc" id="ARA:AT3G57030-MONOMER"/>
<dbReference type="PRO" id="PR:Q4V3D9"/>
<dbReference type="Proteomes" id="UP000006548">
    <property type="component" value="Chromosome 3"/>
</dbReference>
<dbReference type="ExpressionAtlas" id="Q4V3D9">
    <property type="expression patterns" value="baseline and differential"/>
</dbReference>
<dbReference type="GO" id="GO:0005829">
    <property type="term" value="C:cytosol"/>
    <property type="evidence" value="ECO:0007005"/>
    <property type="project" value="TAIR"/>
</dbReference>
<dbReference type="GO" id="GO:0005783">
    <property type="term" value="C:endoplasmic reticulum"/>
    <property type="evidence" value="ECO:0007005"/>
    <property type="project" value="TAIR"/>
</dbReference>
<dbReference type="GO" id="GO:0009505">
    <property type="term" value="C:plant-type cell wall"/>
    <property type="evidence" value="ECO:0007005"/>
    <property type="project" value="TAIR"/>
</dbReference>
<dbReference type="GO" id="GO:0005886">
    <property type="term" value="C:plasma membrane"/>
    <property type="evidence" value="ECO:0007005"/>
    <property type="project" value="TAIR"/>
</dbReference>
<dbReference type="GO" id="GO:0009506">
    <property type="term" value="C:plasmodesma"/>
    <property type="evidence" value="ECO:0007005"/>
    <property type="project" value="TAIR"/>
</dbReference>
<dbReference type="GO" id="GO:0005773">
    <property type="term" value="C:vacuole"/>
    <property type="evidence" value="ECO:0007669"/>
    <property type="project" value="UniProtKB-SubCell"/>
</dbReference>
<dbReference type="FunFam" id="2.120.10.30:FF:000032">
    <property type="entry name" value="Protein STRICTOSIDINE SYNTHASE-LIKE 13"/>
    <property type="match status" value="1"/>
</dbReference>
<dbReference type="Gene3D" id="2.120.10.30">
    <property type="entry name" value="TolB, C-terminal domain"/>
    <property type="match status" value="1"/>
</dbReference>
<dbReference type="InterPro" id="IPR011042">
    <property type="entry name" value="6-blade_b-propeller_TolB-like"/>
</dbReference>
<dbReference type="InterPro" id="IPR018119">
    <property type="entry name" value="Strictosidine_synth_cons-reg"/>
</dbReference>
<dbReference type="PANTHER" id="PTHR10426:SF69">
    <property type="entry name" value="PROTEIN STRICTOSIDINE SYNTHASE-LIKE 10"/>
    <property type="match status" value="1"/>
</dbReference>
<dbReference type="PANTHER" id="PTHR10426">
    <property type="entry name" value="STRICTOSIDINE SYNTHASE-RELATED"/>
    <property type="match status" value="1"/>
</dbReference>
<dbReference type="Pfam" id="PF20067">
    <property type="entry name" value="SSL_N"/>
    <property type="match status" value="1"/>
</dbReference>
<dbReference type="Pfam" id="PF03088">
    <property type="entry name" value="Str_synth"/>
    <property type="match status" value="1"/>
</dbReference>
<dbReference type="SUPFAM" id="SSF63829">
    <property type="entry name" value="Calcium-dependent phosphotriesterase"/>
    <property type="match status" value="1"/>
</dbReference>
<evidence type="ECO:0000250" key="1"/>
<evidence type="ECO:0000255" key="2"/>
<evidence type="ECO:0000255" key="3">
    <source>
        <dbReference type="PROSITE-ProRule" id="PRU00498"/>
    </source>
</evidence>
<evidence type="ECO:0000303" key="4">
    <source>
    </source>
</evidence>
<evidence type="ECO:0000303" key="5">
    <source>
    </source>
</evidence>
<evidence type="ECO:0000305" key="6"/>
<evidence type="ECO:0000312" key="7">
    <source>
        <dbReference type="Araport" id="AT3G57030"/>
    </source>
</evidence>
<evidence type="ECO:0000312" key="8">
    <source>
        <dbReference type="EMBL" id="AAY56408.1"/>
    </source>
</evidence>
<evidence type="ECO:0000312" key="9">
    <source>
        <dbReference type="EMBL" id="CAB72173.1"/>
    </source>
</evidence>
<gene>
    <name evidence="4" type="primary">SSL10</name>
    <name evidence="5" type="synonym">SS8</name>
    <name evidence="7" type="ordered locus">At3g57030</name>
    <name evidence="9" type="ORF">F24I3.110</name>
</gene>
<comment type="subcellular location">
    <subcellularLocation>
        <location evidence="1">Vacuole</location>
    </subcellularLocation>
</comment>
<comment type="similarity">
    <text evidence="6">Belongs to the strictosidine synthase family.</text>
</comment>
<comment type="sequence caution" evidence="6">
    <conflict type="erroneous initiation">
        <sequence resource="EMBL-CDS" id="CAB72173"/>
    </conflict>
    <text>Truncated N-terminus.</text>
</comment>
<feature type="signal peptide" evidence="2">
    <location>
        <begin position="1"/>
        <end position="18"/>
    </location>
</feature>
<feature type="chain" id="PRO_0000431597" description="Protein STRICTOSIDINE SYNTHASE-LIKE 10" evidence="2">
    <location>
        <begin position="19"/>
        <end position="374"/>
    </location>
</feature>
<feature type="glycosylation site" description="N-linked (GlcNAc...) asparagine" evidence="3">
    <location>
        <position position="50"/>
    </location>
</feature>
<feature type="sequence conflict" description="In Ref. 3; BAE99809." evidence="6" ref="3">
    <original>E</original>
    <variation>G</variation>
    <location>
        <position position="339"/>
    </location>
</feature>
<organism evidence="8">
    <name type="scientific">Arabidopsis thaliana</name>
    <name type="common">Mouse-ear cress</name>
    <dbReference type="NCBI Taxonomy" id="3702"/>
    <lineage>
        <taxon>Eukaryota</taxon>
        <taxon>Viridiplantae</taxon>
        <taxon>Streptophyta</taxon>
        <taxon>Embryophyta</taxon>
        <taxon>Tracheophyta</taxon>
        <taxon>Spermatophyta</taxon>
        <taxon>Magnoliopsida</taxon>
        <taxon>eudicotyledons</taxon>
        <taxon>Gunneridae</taxon>
        <taxon>Pentapetalae</taxon>
        <taxon>rosids</taxon>
        <taxon>malvids</taxon>
        <taxon>Brassicales</taxon>
        <taxon>Brassicaceae</taxon>
        <taxon>Camelineae</taxon>
        <taxon>Arabidopsis</taxon>
    </lineage>
</organism>
<reference key="1">
    <citation type="journal article" date="2000" name="Nature">
        <title>Sequence and analysis of chromosome 3 of the plant Arabidopsis thaliana.</title>
        <authorList>
            <person name="Salanoubat M."/>
            <person name="Lemcke K."/>
            <person name="Rieger M."/>
            <person name="Ansorge W."/>
            <person name="Unseld M."/>
            <person name="Fartmann B."/>
            <person name="Valle G."/>
            <person name="Bloecker H."/>
            <person name="Perez-Alonso M."/>
            <person name="Obermaier B."/>
            <person name="Delseny M."/>
            <person name="Boutry M."/>
            <person name="Grivell L.A."/>
            <person name="Mache R."/>
            <person name="Puigdomenech P."/>
            <person name="De Simone V."/>
            <person name="Choisne N."/>
            <person name="Artiguenave F."/>
            <person name="Robert C."/>
            <person name="Brottier P."/>
            <person name="Wincker P."/>
            <person name="Cattolico L."/>
            <person name="Weissenbach J."/>
            <person name="Saurin W."/>
            <person name="Quetier F."/>
            <person name="Schaefer M."/>
            <person name="Mueller-Auer S."/>
            <person name="Gabel C."/>
            <person name="Fuchs M."/>
            <person name="Benes V."/>
            <person name="Wurmbach E."/>
            <person name="Drzonek H."/>
            <person name="Erfle H."/>
            <person name="Jordan N."/>
            <person name="Bangert S."/>
            <person name="Wiedelmann R."/>
            <person name="Kranz H."/>
            <person name="Voss H."/>
            <person name="Holland R."/>
            <person name="Brandt P."/>
            <person name="Nyakatura G."/>
            <person name="Vezzi A."/>
            <person name="D'Angelo M."/>
            <person name="Pallavicini A."/>
            <person name="Toppo S."/>
            <person name="Simionati B."/>
            <person name="Conrad A."/>
            <person name="Hornischer K."/>
            <person name="Kauer G."/>
            <person name="Loehnert T.-H."/>
            <person name="Nordsiek G."/>
            <person name="Reichelt J."/>
            <person name="Scharfe M."/>
            <person name="Schoen O."/>
            <person name="Bargues M."/>
            <person name="Terol J."/>
            <person name="Climent J."/>
            <person name="Navarro P."/>
            <person name="Collado C."/>
            <person name="Perez-Perez A."/>
            <person name="Ottenwaelder B."/>
            <person name="Duchemin D."/>
            <person name="Cooke R."/>
            <person name="Laudie M."/>
            <person name="Berger-Llauro C."/>
            <person name="Purnelle B."/>
            <person name="Masuy D."/>
            <person name="de Haan M."/>
            <person name="Maarse A.C."/>
            <person name="Alcaraz J.-P."/>
            <person name="Cottet A."/>
            <person name="Casacuberta E."/>
            <person name="Monfort A."/>
            <person name="Argiriou A."/>
            <person name="Flores M."/>
            <person name="Liguori R."/>
            <person name="Vitale D."/>
            <person name="Mannhaupt G."/>
            <person name="Haase D."/>
            <person name="Schoof H."/>
            <person name="Rudd S."/>
            <person name="Zaccaria P."/>
            <person name="Mewes H.-W."/>
            <person name="Mayer K.F.X."/>
            <person name="Kaul S."/>
            <person name="Town C.D."/>
            <person name="Koo H.L."/>
            <person name="Tallon L.J."/>
            <person name="Jenkins J."/>
            <person name="Rooney T."/>
            <person name="Rizzo M."/>
            <person name="Walts A."/>
            <person name="Utterback T."/>
            <person name="Fujii C.Y."/>
            <person name="Shea T.P."/>
            <person name="Creasy T.H."/>
            <person name="Haas B."/>
            <person name="Maiti R."/>
            <person name="Wu D."/>
            <person name="Peterson J."/>
            <person name="Van Aken S."/>
            <person name="Pai G."/>
            <person name="Militscher J."/>
            <person name="Sellers P."/>
            <person name="Gill J.E."/>
            <person name="Feldblyum T.V."/>
            <person name="Preuss D."/>
            <person name="Lin X."/>
            <person name="Nierman W.C."/>
            <person name="Salzberg S.L."/>
            <person name="White O."/>
            <person name="Venter J.C."/>
            <person name="Fraser C.M."/>
            <person name="Kaneko T."/>
            <person name="Nakamura Y."/>
            <person name="Sato S."/>
            <person name="Kato T."/>
            <person name="Asamizu E."/>
            <person name="Sasamoto S."/>
            <person name="Kimura T."/>
            <person name="Idesawa K."/>
            <person name="Kawashima K."/>
            <person name="Kishida Y."/>
            <person name="Kiyokawa C."/>
            <person name="Kohara M."/>
            <person name="Matsumoto M."/>
            <person name="Matsuno A."/>
            <person name="Muraki A."/>
            <person name="Nakayama S."/>
            <person name="Nakazaki N."/>
            <person name="Shinpo S."/>
            <person name="Takeuchi C."/>
            <person name="Wada T."/>
            <person name="Watanabe A."/>
            <person name="Yamada M."/>
            <person name="Yasuda M."/>
            <person name="Tabata S."/>
        </authorList>
    </citation>
    <scope>NUCLEOTIDE SEQUENCE [LARGE SCALE GENOMIC DNA]</scope>
    <source>
        <strain>cv. Columbia</strain>
    </source>
</reference>
<reference key="2">
    <citation type="journal article" date="2017" name="Plant J.">
        <title>Araport11: a complete reannotation of the Arabidopsis thaliana reference genome.</title>
        <authorList>
            <person name="Cheng C.Y."/>
            <person name="Krishnakumar V."/>
            <person name="Chan A.P."/>
            <person name="Thibaud-Nissen F."/>
            <person name="Schobel S."/>
            <person name="Town C.D."/>
        </authorList>
    </citation>
    <scope>GENOME REANNOTATION</scope>
    <source>
        <strain>cv. Columbia</strain>
    </source>
</reference>
<reference key="3">
    <citation type="submission" date="2006-07" db="EMBL/GenBank/DDBJ databases">
        <title>Large-scale analysis of RIKEN Arabidopsis full-length (RAFL) cDNAs.</title>
        <authorList>
            <person name="Totoki Y."/>
            <person name="Seki M."/>
            <person name="Ishida J."/>
            <person name="Nakajima M."/>
            <person name="Enju A."/>
            <person name="Kamiya A."/>
            <person name="Narusaka M."/>
            <person name="Shin-i T."/>
            <person name="Nakagawa M."/>
            <person name="Sakamoto N."/>
            <person name="Oishi K."/>
            <person name="Kohara Y."/>
            <person name="Kobayashi M."/>
            <person name="Toyoda A."/>
            <person name="Sakaki Y."/>
            <person name="Sakurai T."/>
            <person name="Iida K."/>
            <person name="Akiyama K."/>
            <person name="Satou M."/>
            <person name="Toyoda T."/>
            <person name="Konagaya A."/>
            <person name="Carninci P."/>
            <person name="Kawai J."/>
            <person name="Hayashizaki Y."/>
            <person name="Shinozaki K."/>
        </authorList>
    </citation>
    <scope>NUCLEOTIDE SEQUENCE [LARGE SCALE MRNA]</scope>
    <source>
        <strain>cv. Columbia</strain>
    </source>
</reference>
<reference key="4">
    <citation type="submission" date="2006-08" db="EMBL/GenBank/DDBJ databases">
        <title>Arabidopsis ORF Clones.</title>
        <authorList>
            <person name="Quinitio C."/>
            <person name="Chen H."/>
            <person name="Kim C.J."/>
            <person name="Shinn P."/>
            <person name="Ecker J.R."/>
        </authorList>
    </citation>
    <scope>NUCLEOTIDE SEQUENCE [LARGE SCALE MRNA]</scope>
    <source>
        <strain>cv. Columbia</strain>
    </source>
</reference>
<reference key="5">
    <citation type="journal article" date="2000" name="Biochem. Biophys. Res. Commun.">
        <title>Animal and plant members of a gene family with similarity to alkaloid-synthesizing enzymes.</title>
        <authorList>
            <person name="Fabbri M."/>
            <person name="Delp G."/>
            <person name="Schmidt O."/>
            <person name="Theopold U."/>
        </authorList>
    </citation>
    <scope>GENE FAMILY</scope>
    <scope>NOMENCLATURE</scope>
</reference>
<reference key="6">
    <citation type="journal article" date="2009" name="Plant Biol.">
        <title>Phylogenetic and transcriptional analysis of a strictosidine synthase-like gene family in Arabidopsis thaliana reveals involvement in plant defence responses.</title>
        <authorList>
            <person name="Sohani M.M."/>
            <person name="Schenk P.M."/>
            <person name="Schultz C.J."/>
            <person name="Schmidt O."/>
        </authorList>
    </citation>
    <scope>GENE FAMILY</scope>
    <source>
        <strain>cv. Columbia</strain>
    </source>
</reference>
<sequence length="374" mass="41001">MTMMIITVFLTVIAAVLAILVKNSQTGSGIFAPPEISGSRDVFPSAKVVNLTGASGPESIAFDPAGEGPYVGVSDGRILKWRGEPLGWSDFAHTSSNRQECARPFAPELEHVCGRPLGLRFDKKTGDLYIADAYFGLLVVGPAGGLAKPLVTEAEGQPFRFTNDLDIDEQEDVIYFTDTSARFQRRQFLAAVLNVDKTGRFIKYDRSSKKATVLLQGLAFANGVALSKDRSFVLVVETTTCKILRLWLSGPNAGTHQVFAELPGFPDNIRRNSNGEFWVALHSKKGLFAKLSLTQTWFRDLVLRLPISPQRLHSLFTGGIPHATAIKLSESGKVLEVLEDKEGKTLRFISEVEEKDGKLWIGSVLVPFLGVYDL</sequence>
<accession>Q4V3D9</accession>
<accession>Q0WST9</accession>
<accession>Q9M1J5</accession>